<sequence>MAAKDVKFGNDARVKMLRGVNVLADAVKVTLGPKGRNVVLDKSFGAPTITKDGVSVAREIELEDKFENMGAQMVKEVASKANDAAGDGTTTATVLAQAIITEGLKAVAAGMNPMDLKRGIDKAVTAAVEELKALSVPCSDSKAIAQVGTISANSDETVGKLIAEAMDKVGKEGVITVEDGTGLQDELDVVEGMQFDRGYLSPYFINKPETGAVELESPFILLADKKISNIREMLPVLEAVAKAGKPLLIIAEDVEGEALATLVVNTMRGIVKVAAVKAPGFGDRRKAMLQDIATLTGGTVISEEIGMELEKATLEDLGQAKRVVINKDTTTIIDGVGEEAAIQGRVAQIRQQIEEATSDYDREKLQERVAKLAGGVAVIKVGAATEVEMKEKKARVEDALHATRAAVEEGVVAGGGVALIRVASKLADLRGQNEDQNVGIKVALRAMEAPLRQIVLNCGEEPSVVANTVKGGDGNYGYNAATEEYGNMIDMGILDPTKVTRSALQYAASVAGLMITTECMVTDLPKNDAADLGAAGGMGGMGGMGGMM</sequence>
<accession>Q1R3B6</accession>
<feature type="chain" id="PRO_0000256909" description="Chaperonin GroEL">
    <location>
        <begin position="1"/>
        <end position="548"/>
    </location>
</feature>
<feature type="binding site" evidence="1">
    <location>
        <begin position="30"/>
        <end position="33"/>
    </location>
    <ligand>
        <name>ATP</name>
        <dbReference type="ChEBI" id="CHEBI:30616"/>
    </ligand>
</feature>
<feature type="binding site" evidence="1">
    <location>
        <position position="51"/>
    </location>
    <ligand>
        <name>ATP</name>
        <dbReference type="ChEBI" id="CHEBI:30616"/>
    </ligand>
</feature>
<feature type="binding site" evidence="1">
    <location>
        <begin position="87"/>
        <end position="91"/>
    </location>
    <ligand>
        <name>ATP</name>
        <dbReference type="ChEBI" id="CHEBI:30616"/>
    </ligand>
</feature>
<feature type="binding site" evidence="1">
    <location>
        <position position="415"/>
    </location>
    <ligand>
        <name>ATP</name>
        <dbReference type="ChEBI" id="CHEBI:30616"/>
    </ligand>
</feature>
<feature type="binding site" evidence="1">
    <location>
        <begin position="479"/>
        <end position="481"/>
    </location>
    <ligand>
        <name>ATP</name>
        <dbReference type="ChEBI" id="CHEBI:30616"/>
    </ligand>
</feature>
<feature type="binding site" evidence="1">
    <location>
        <position position="495"/>
    </location>
    <ligand>
        <name>ATP</name>
        <dbReference type="ChEBI" id="CHEBI:30616"/>
    </ligand>
</feature>
<organism>
    <name type="scientific">Escherichia coli (strain UTI89 / UPEC)</name>
    <dbReference type="NCBI Taxonomy" id="364106"/>
    <lineage>
        <taxon>Bacteria</taxon>
        <taxon>Pseudomonadati</taxon>
        <taxon>Pseudomonadota</taxon>
        <taxon>Gammaproteobacteria</taxon>
        <taxon>Enterobacterales</taxon>
        <taxon>Enterobacteriaceae</taxon>
        <taxon>Escherichia</taxon>
    </lineage>
</organism>
<evidence type="ECO:0000255" key="1">
    <source>
        <dbReference type="HAMAP-Rule" id="MF_00600"/>
    </source>
</evidence>
<protein>
    <recommendedName>
        <fullName evidence="1">Chaperonin GroEL</fullName>
        <ecNumber evidence="1">5.6.1.7</ecNumber>
    </recommendedName>
    <alternativeName>
        <fullName evidence="1">60 kDa chaperonin</fullName>
    </alternativeName>
    <alternativeName>
        <fullName evidence="1">Chaperonin-60</fullName>
        <shortName evidence="1">Cpn60</shortName>
    </alternativeName>
</protein>
<name>CH60_ECOUT</name>
<comment type="function">
    <text evidence="1">Together with its co-chaperonin GroES, plays an essential role in assisting protein folding. The GroEL-GroES system forms a nano-cage that allows encapsulation of the non-native substrate proteins and provides a physical environment optimized to promote and accelerate protein folding.</text>
</comment>
<comment type="catalytic activity">
    <reaction evidence="1">
        <text>ATP + H2O + a folded polypeptide = ADP + phosphate + an unfolded polypeptide.</text>
        <dbReference type="EC" id="5.6.1.7"/>
    </reaction>
</comment>
<comment type="subunit">
    <text evidence="1">Forms a cylinder of 14 subunits composed of two heptameric rings stacked back-to-back. Interacts with the co-chaperonin GroES.</text>
</comment>
<comment type="subcellular location">
    <subcellularLocation>
        <location evidence="1">Cytoplasm</location>
    </subcellularLocation>
</comment>
<comment type="similarity">
    <text evidence="1">Belongs to the chaperonin (HSP60) family.</text>
</comment>
<keyword id="KW-0002">3D-structure</keyword>
<keyword id="KW-0067">ATP-binding</keyword>
<keyword id="KW-0143">Chaperone</keyword>
<keyword id="KW-0963">Cytoplasm</keyword>
<keyword id="KW-0413">Isomerase</keyword>
<keyword id="KW-0547">Nucleotide-binding</keyword>
<gene>
    <name evidence="1" type="primary">groEL</name>
    <name evidence="1" type="synonym">groL</name>
    <name type="ordered locus">UTI89_C4741</name>
</gene>
<dbReference type="EC" id="5.6.1.7" evidence="1"/>
<dbReference type="EMBL" id="CP000243">
    <property type="protein sequence ID" value="ABE10148.1"/>
    <property type="molecule type" value="Genomic_DNA"/>
</dbReference>
<dbReference type="RefSeq" id="WP_000729117.1">
    <property type="nucleotide sequence ID" value="NZ_CP064825.1"/>
</dbReference>
<dbReference type="PDB" id="2YNJ">
    <property type="method" value="EM"/>
    <property type="resolution" value="8.40 A"/>
    <property type="chains" value="A/B/C/D/E/F/G/H/I/J/K/L/M/N=2-525"/>
</dbReference>
<dbReference type="PDB" id="3E76">
    <property type="method" value="X-ray"/>
    <property type="resolution" value="3.94 A"/>
    <property type="chains" value="A/B/C/D/E/F/G/H/I/J/K/L/M/N=2-548"/>
</dbReference>
<dbReference type="PDBsum" id="2YNJ"/>
<dbReference type="PDBsum" id="3E76"/>
<dbReference type="EMDB" id="EMD-2221"/>
<dbReference type="SMR" id="Q1R3B6"/>
<dbReference type="DIP" id="DIP-59993N"/>
<dbReference type="GeneID" id="93777681"/>
<dbReference type="KEGG" id="eci:UTI89_C4741"/>
<dbReference type="HOGENOM" id="CLU_016503_3_0_6"/>
<dbReference type="EvolutionaryTrace" id="Q1R3B6"/>
<dbReference type="Proteomes" id="UP000001952">
    <property type="component" value="Chromosome"/>
</dbReference>
<dbReference type="GO" id="GO:0005737">
    <property type="term" value="C:cytoplasm"/>
    <property type="evidence" value="ECO:0007669"/>
    <property type="project" value="UniProtKB-SubCell"/>
</dbReference>
<dbReference type="GO" id="GO:0005524">
    <property type="term" value="F:ATP binding"/>
    <property type="evidence" value="ECO:0007669"/>
    <property type="project" value="UniProtKB-UniRule"/>
</dbReference>
<dbReference type="GO" id="GO:0140662">
    <property type="term" value="F:ATP-dependent protein folding chaperone"/>
    <property type="evidence" value="ECO:0007669"/>
    <property type="project" value="InterPro"/>
</dbReference>
<dbReference type="GO" id="GO:0016853">
    <property type="term" value="F:isomerase activity"/>
    <property type="evidence" value="ECO:0007669"/>
    <property type="project" value="UniProtKB-KW"/>
</dbReference>
<dbReference type="GO" id="GO:0051082">
    <property type="term" value="F:unfolded protein binding"/>
    <property type="evidence" value="ECO:0007669"/>
    <property type="project" value="UniProtKB-UniRule"/>
</dbReference>
<dbReference type="GO" id="GO:0042026">
    <property type="term" value="P:protein refolding"/>
    <property type="evidence" value="ECO:0007669"/>
    <property type="project" value="UniProtKB-UniRule"/>
</dbReference>
<dbReference type="CDD" id="cd03344">
    <property type="entry name" value="GroEL"/>
    <property type="match status" value="1"/>
</dbReference>
<dbReference type="FunFam" id="1.10.560.10:FF:000001">
    <property type="entry name" value="60 kDa chaperonin"/>
    <property type="match status" value="1"/>
</dbReference>
<dbReference type="FunFam" id="3.50.7.10:FF:000001">
    <property type="entry name" value="60 kDa chaperonin"/>
    <property type="match status" value="1"/>
</dbReference>
<dbReference type="Gene3D" id="3.50.7.10">
    <property type="entry name" value="GroEL"/>
    <property type="match status" value="1"/>
</dbReference>
<dbReference type="Gene3D" id="1.10.560.10">
    <property type="entry name" value="GroEL-like equatorial domain"/>
    <property type="match status" value="1"/>
</dbReference>
<dbReference type="Gene3D" id="3.30.260.10">
    <property type="entry name" value="TCP-1-like chaperonin intermediate domain"/>
    <property type="match status" value="1"/>
</dbReference>
<dbReference type="HAMAP" id="MF_00600">
    <property type="entry name" value="CH60"/>
    <property type="match status" value="1"/>
</dbReference>
<dbReference type="InterPro" id="IPR018370">
    <property type="entry name" value="Chaperonin_Cpn60_CS"/>
</dbReference>
<dbReference type="InterPro" id="IPR001844">
    <property type="entry name" value="Cpn60/GroEL"/>
</dbReference>
<dbReference type="InterPro" id="IPR002423">
    <property type="entry name" value="Cpn60/GroEL/TCP-1"/>
</dbReference>
<dbReference type="InterPro" id="IPR027409">
    <property type="entry name" value="GroEL-like_apical_dom_sf"/>
</dbReference>
<dbReference type="InterPro" id="IPR027413">
    <property type="entry name" value="GROEL-like_equatorial_sf"/>
</dbReference>
<dbReference type="InterPro" id="IPR027410">
    <property type="entry name" value="TCP-1-like_intermed_sf"/>
</dbReference>
<dbReference type="NCBIfam" id="TIGR02348">
    <property type="entry name" value="GroEL"/>
    <property type="match status" value="1"/>
</dbReference>
<dbReference type="NCBIfam" id="NF000592">
    <property type="entry name" value="PRK00013.1"/>
    <property type="match status" value="1"/>
</dbReference>
<dbReference type="NCBIfam" id="NF009487">
    <property type="entry name" value="PRK12849.1"/>
    <property type="match status" value="1"/>
</dbReference>
<dbReference type="NCBIfam" id="NF009488">
    <property type="entry name" value="PRK12850.1"/>
    <property type="match status" value="1"/>
</dbReference>
<dbReference type="NCBIfam" id="NF009489">
    <property type="entry name" value="PRK12851.1"/>
    <property type="match status" value="1"/>
</dbReference>
<dbReference type="PANTHER" id="PTHR45633">
    <property type="entry name" value="60 KDA HEAT SHOCK PROTEIN, MITOCHONDRIAL"/>
    <property type="match status" value="1"/>
</dbReference>
<dbReference type="Pfam" id="PF00118">
    <property type="entry name" value="Cpn60_TCP1"/>
    <property type="match status" value="1"/>
</dbReference>
<dbReference type="PRINTS" id="PR00298">
    <property type="entry name" value="CHAPERONIN60"/>
</dbReference>
<dbReference type="SUPFAM" id="SSF52029">
    <property type="entry name" value="GroEL apical domain-like"/>
    <property type="match status" value="1"/>
</dbReference>
<dbReference type="SUPFAM" id="SSF48592">
    <property type="entry name" value="GroEL equatorial domain-like"/>
    <property type="match status" value="1"/>
</dbReference>
<dbReference type="SUPFAM" id="SSF54849">
    <property type="entry name" value="GroEL-intermediate domain like"/>
    <property type="match status" value="1"/>
</dbReference>
<dbReference type="PROSITE" id="PS00296">
    <property type="entry name" value="CHAPERONINS_CPN60"/>
    <property type="match status" value="1"/>
</dbReference>
<reference key="1">
    <citation type="journal article" date="2006" name="Proc. Natl. Acad. Sci. U.S.A.">
        <title>Identification of genes subject to positive selection in uropathogenic strains of Escherichia coli: a comparative genomics approach.</title>
        <authorList>
            <person name="Chen S.L."/>
            <person name="Hung C.-S."/>
            <person name="Xu J."/>
            <person name="Reigstad C.S."/>
            <person name="Magrini V."/>
            <person name="Sabo A."/>
            <person name="Blasiar D."/>
            <person name="Bieri T."/>
            <person name="Meyer R.R."/>
            <person name="Ozersky P."/>
            <person name="Armstrong J.R."/>
            <person name="Fulton R.S."/>
            <person name="Latreille J.P."/>
            <person name="Spieth J."/>
            <person name="Hooton T.M."/>
            <person name="Mardis E.R."/>
            <person name="Hultgren S.J."/>
            <person name="Gordon J.I."/>
        </authorList>
    </citation>
    <scope>NUCLEOTIDE SEQUENCE [LARGE SCALE GENOMIC DNA]</scope>
    <source>
        <strain>UTI89 / UPEC</strain>
    </source>
</reference>
<proteinExistence type="evidence at protein level"/>